<dbReference type="EMBL" id="AJ011604">
    <property type="protein sequence ID" value="CAB38705.1"/>
    <property type="molecule type" value="mRNA"/>
</dbReference>
<dbReference type="EMBL" id="AC003105">
    <property type="protein sequence ID" value="AAB95302.1"/>
    <property type="status" value="ALT_SEQ"/>
    <property type="molecule type" value="Genomic_DNA"/>
</dbReference>
<dbReference type="EMBL" id="CP002685">
    <property type="protein sequence ID" value="AEC07875.1"/>
    <property type="molecule type" value="Genomic_DNA"/>
</dbReference>
<dbReference type="EMBL" id="AY099800">
    <property type="protein sequence ID" value="AAM20651.1"/>
    <property type="molecule type" value="mRNA"/>
</dbReference>
<dbReference type="PIR" id="F84663">
    <property type="entry name" value="F84663"/>
</dbReference>
<dbReference type="PIR" id="T52608">
    <property type="entry name" value="T52608"/>
</dbReference>
<dbReference type="RefSeq" id="NP_850084.1">
    <property type="nucleotide sequence ID" value="NM_179753.1"/>
</dbReference>
<dbReference type="SMR" id="Q9SZY4"/>
<dbReference type="FunCoup" id="Q9SZY4">
    <property type="interactions" value="1852"/>
</dbReference>
<dbReference type="STRING" id="3702.Q9SZY4"/>
<dbReference type="TCDB" id="2.A.17.3.18">
    <property type="family name" value="the proton-dependent oligopeptide transporter (pot/ptr) family"/>
</dbReference>
<dbReference type="iPTMnet" id="Q9SZY4"/>
<dbReference type="PaxDb" id="3702-AT2G26690.1"/>
<dbReference type="ProteomicsDB" id="224842"/>
<dbReference type="EnsemblPlants" id="AT2G26690.1">
    <property type="protein sequence ID" value="AT2G26690.1"/>
    <property type="gene ID" value="AT2G26690"/>
</dbReference>
<dbReference type="GeneID" id="817210"/>
<dbReference type="Gramene" id="AT2G26690.1">
    <property type="protein sequence ID" value="AT2G26690.1"/>
    <property type="gene ID" value="AT2G26690"/>
</dbReference>
<dbReference type="KEGG" id="ath:AT2G26690"/>
<dbReference type="Araport" id="AT2G26690"/>
<dbReference type="TAIR" id="AT2G26690">
    <property type="gene designation" value="NPF6.2"/>
</dbReference>
<dbReference type="eggNOG" id="KOG1237">
    <property type="taxonomic scope" value="Eukaryota"/>
</dbReference>
<dbReference type="HOGENOM" id="CLU_009313_4_1_1"/>
<dbReference type="InParanoid" id="Q9SZY4"/>
<dbReference type="PhylomeDB" id="Q9SZY4"/>
<dbReference type="SABIO-RK" id="Q9SZY4"/>
<dbReference type="PRO" id="PR:Q9SZY4"/>
<dbReference type="Proteomes" id="UP000006548">
    <property type="component" value="Chromosome 2"/>
</dbReference>
<dbReference type="ExpressionAtlas" id="Q9SZY4">
    <property type="expression patterns" value="baseline and differential"/>
</dbReference>
<dbReference type="GO" id="GO:0016020">
    <property type="term" value="C:membrane"/>
    <property type="evidence" value="ECO:0007669"/>
    <property type="project" value="UniProtKB-SubCell"/>
</dbReference>
<dbReference type="GO" id="GO:0015293">
    <property type="term" value="F:symporter activity"/>
    <property type="evidence" value="ECO:0007669"/>
    <property type="project" value="UniProtKB-KW"/>
</dbReference>
<dbReference type="GO" id="GO:0042128">
    <property type="term" value="P:nitrate assimilation"/>
    <property type="evidence" value="ECO:0007669"/>
    <property type="project" value="UniProtKB-KW"/>
</dbReference>
<dbReference type="GO" id="GO:0006857">
    <property type="term" value="P:oligopeptide transport"/>
    <property type="evidence" value="ECO:0007669"/>
    <property type="project" value="InterPro"/>
</dbReference>
<dbReference type="GO" id="GO:0009753">
    <property type="term" value="P:response to jasmonic acid"/>
    <property type="evidence" value="ECO:0000270"/>
    <property type="project" value="TAIR"/>
</dbReference>
<dbReference type="GO" id="GO:0009611">
    <property type="term" value="P:response to wounding"/>
    <property type="evidence" value="ECO:0000270"/>
    <property type="project" value="TAIR"/>
</dbReference>
<dbReference type="CDD" id="cd17413">
    <property type="entry name" value="MFS_NPF6"/>
    <property type="match status" value="1"/>
</dbReference>
<dbReference type="Gene3D" id="1.20.1250.20">
    <property type="entry name" value="MFS general substrate transporter like domains"/>
    <property type="match status" value="1"/>
</dbReference>
<dbReference type="InterPro" id="IPR036259">
    <property type="entry name" value="MFS_trans_sf"/>
</dbReference>
<dbReference type="InterPro" id="IPR000109">
    <property type="entry name" value="POT_fam"/>
</dbReference>
<dbReference type="InterPro" id="IPR018456">
    <property type="entry name" value="PTR2_symporter_CS"/>
</dbReference>
<dbReference type="PANTHER" id="PTHR11654">
    <property type="entry name" value="OLIGOPEPTIDE TRANSPORTER-RELATED"/>
    <property type="match status" value="1"/>
</dbReference>
<dbReference type="Pfam" id="PF00854">
    <property type="entry name" value="PTR2"/>
    <property type="match status" value="1"/>
</dbReference>
<dbReference type="SUPFAM" id="SSF103473">
    <property type="entry name" value="MFS general substrate transporter"/>
    <property type="match status" value="1"/>
</dbReference>
<dbReference type="PROSITE" id="PS01022">
    <property type="entry name" value="PTR2_1"/>
    <property type="match status" value="1"/>
</dbReference>
<accession>Q9SZY4</accession>
<accession>O48784</accession>
<accession>Q8LPH1</accession>
<reference key="1">
    <citation type="online journal article" date="1999" name="Plant Gene Register">
        <title>Identification of two putative nitrate transporters highly homologous to CHL 1 from Arabidopsis thaliana.</title>
        <authorList>
            <person name="Hatzfeld Y."/>
            <person name="Saito K."/>
        </authorList>
        <locator>PGR99-018</locator>
    </citation>
    <scope>NUCLEOTIDE SEQUENCE [MRNA]</scope>
    <source>
        <strain>cv. Columbia</strain>
    </source>
</reference>
<reference key="2">
    <citation type="journal article" date="1999" name="Nature">
        <title>Sequence and analysis of chromosome 2 of the plant Arabidopsis thaliana.</title>
        <authorList>
            <person name="Lin X."/>
            <person name="Kaul S."/>
            <person name="Rounsley S.D."/>
            <person name="Shea T.P."/>
            <person name="Benito M.-I."/>
            <person name="Town C.D."/>
            <person name="Fujii C.Y."/>
            <person name="Mason T.M."/>
            <person name="Bowman C.L."/>
            <person name="Barnstead M.E."/>
            <person name="Feldblyum T.V."/>
            <person name="Buell C.R."/>
            <person name="Ketchum K.A."/>
            <person name="Lee J.J."/>
            <person name="Ronning C.M."/>
            <person name="Koo H.L."/>
            <person name="Moffat K.S."/>
            <person name="Cronin L.A."/>
            <person name="Shen M."/>
            <person name="Pai G."/>
            <person name="Van Aken S."/>
            <person name="Umayam L."/>
            <person name="Tallon L.J."/>
            <person name="Gill J.E."/>
            <person name="Adams M.D."/>
            <person name="Carrera A.J."/>
            <person name="Creasy T.H."/>
            <person name="Goodman H.M."/>
            <person name="Somerville C.R."/>
            <person name="Copenhaver G.P."/>
            <person name="Preuss D."/>
            <person name="Nierman W.C."/>
            <person name="White O."/>
            <person name="Eisen J.A."/>
            <person name="Salzberg S.L."/>
            <person name="Fraser C.M."/>
            <person name="Venter J.C."/>
        </authorList>
    </citation>
    <scope>NUCLEOTIDE SEQUENCE [LARGE SCALE GENOMIC DNA]</scope>
    <source>
        <strain>cv. Columbia</strain>
    </source>
</reference>
<reference key="3">
    <citation type="journal article" date="2017" name="Plant J.">
        <title>Araport11: a complete reannotation of the Arabidopsis thaliana reference genome.</title>
        <authorList>
            <person name="Cheng C.Y."/>
            <person name="Krishnakumar V."/>
            <person name="Chan A.P."/>
            <person name="Thibaud-Nissen F."/>
            <person name="Schobel S."/>
            <person name="Town C.D."/>
        </authorList>
    </citation>
    <scope>GENOME REANNOTATION</scope>
    <source>
        <strain>cv. Columbia</strain>
    </source>
</reference>
<reference key="4">
    <citation type="journal article" date="2003" name="Science">
        <title>Empirical analysis of transcriptional activity in the Arabidopsis genome.</title>
        <authorList>
            <person name="Yamada K."/>
            <person name="Lim J."/>
            <person name="Dale J.M."/>
            <person name="Chen H."/>
            <person name="Shinn P."/>
            <person name="Palm C.J."/>
            <person name="Southwick A.M."/>
            <person name="Wu H.C."/>
            <person name="Kim C.J."/>
            <person name="Nguyen M."/>
            <person name="Pham P.K."/>
            <person name="Cheuk R.F."/>
            <person name="Karlin-Newmann G."/>
            <person name="Liu S.X."/>
            <person name="Lam B."/>
            <person name="Sakano H."/>
            <person name="Wu T."/>
            <person name="Yu G."/>
            <person name="Miranda M."/>
            <person name="Quach H.L."/>
            <person name="Tripp M."/>
            <person name="Chang C.H."/>
            <person name="Lee J.M."/>
            <person name="Toriumi M.J."/>
            <person name="Chan M.M."/>
            <person name="Tang C.C."/>
            <person name="Onodera C.S."/>
            <person name="Deng J.M."/>
            <person name="Akiyama K."/>
            <person name="Ansari Y."/>
            <person name="Arakawa T."/>
            <person name="Banh J."/>
            <person name="Banno F."/>
            <person name="Bowser L."/>
            <person name="Brooks S.Y."/>
            <person name="Carninci P."/>
            <person name="Chao Q."/>
            <person name="Choy N."/>
            <person name="Enju A."/>
            <person name="Goldsmith A.D."/>
            <person name="Gurjal M."/>
            <person name="Hansen N.F."/>
            <person name="Hayashizaki Y."/>
            <person name="Johnson-Hopson C."/>
            <person name="Hsuan V.W."/>
            <person name="Iida K."/>
            <person name="Karnes M."/>
            <person name="Khan S."/>
            <person name="Koesema E."/>
            <person name="Ishida J."/>
            <person name="Jiang P.X."/>
            <person name="Jones T."/>
            <person name="Kawai J."/>
            <person name="Kamiya A."/>
            <person name="Meyers C."/>
            <person name="Nakajima M."/>
            <person name="Narusaka M."/>
            <person name="Seki M."/>
            <person name="Sakurai T."/>
            <person name="Satou M."/>
            <person name="Tamse R."/>
            <person name="Vaysberg M."/>
            <person name="Wallender E.K."/>
            <person name="Wong C."/>
            <person name="Yamamura Y."/>
            <person name="Yuan S."/>
            <person name="Shinozaki K."/>
            <person name="Davis R.W."/>
            <person name="Theologis A."/>
            <person name="Ecker J.R."/>
        </authorList>
    </citation>
    <scope>NUCLEOTIDE SEQUENCE [LARGE SCALE MRNA]</scope>
    <source>
        <strain>cv. Columbia</strain>
    </source>
</reference>
<reference key="5">
    <citation type="journal article" date="2003" name="Plant Cell Physiol.">
        <title>Regulation of NRT1 and NRT2 gene families of Arabidopsis thaliana: responses to nitrate provision.</title>
        <authorList>
            <person name="Okamoto M."/>
            <person name="Vidmar J.J."/>
            <person name="Glass A.D."/>
        </authorList>
    </citation>
    <scope>INDUCTION BY NITRATE</scope>
</reference>
<reference key="6">
    <citation type="journal article" date="2004" name="Plant Cell Physiol.">
        <title>Mutation of a nitrate transporter, AtNRT1:4, results in a reduced petiole nitrate content and altered leaf development.</title>
        <authorList>
            <person name="Chiu C.C."/>
            <person name="Lin C.S."/>
            <person name="Hsia A.P."/>
            <person name="Su R.C."/>
            <person name="Lin H.L."/>
            <person name="Tsay Y.F."/>
        </authorList>
    </citation>
    <scope>FUNCTION</scope>
    <scope>BIOPHYSICOCHEMICAL PROPERTIES</scope>
    <scope>TISSUE SPECIFICITY</scope>
    <scope>DISRUPTION PHENOTYPE</scope>
</reference>
<reference key="7">
    <citation type="journal article" date="2007" name="FEBS Lett.">
        <title>Nitrate transporters and peptide transporters.</title>
        <authorList>
            <person name="Tsay Y.F."/>
            <person name="Chiu C.C."/>
            <person name="Tsai C.B."/>
            <person name="Ho C.H."/>
            <person name="Hsu P.K."/>
        </authorList>
    </citation>
    <scope>TISSUE SPECIFICITY</scope>
    <scope>GENE FAMILY</scope>
</reference>
<reference key="8">
    <citation type="journal article" date="2010" name="Plant Cell">
        <title>The Arabidopsis nitrate transporter NRT1.8 functions in nitrate removal from the xylem sap and mediates cadmium tolerance.</title>
        <authorList>
            <person name="Li J.Y."/>
            <person name="Fu Y.L."/>
            <person name="Pike S.M."/>
            <person name="Bao J."/>
            <person name="Tian W."/>
            <person name="Zhang Y."/>
            <person name="Chen C.Z."/>
            <person name="Zhang Y."/>
            <person name="Li H.M."/>
            <person name="Huang J."/>
            <person name="Li L.G."/>
            <person name="Schroeder J.I."/>
            <person name="Gassmann W."/>
            <person name="Gong J.M."/>
        </authorList>
    </citation>
    <scope>GENE FAMILY</scope>
</reference>
<reference key="9">
    <citation type="journal article" date="2014" name="Trends Plant Sci.">
        <title>A unified nomenclature of NITRATE TRANSPORTER 1/PEPTIDE TRANSPORTER family members in plants.</title>
        <authorList>
            <person name="Leran S."/>
            <person name="Varala K."/>
            <person name="Boyer J.C."/>
            <person name="Chiurazzi M."/>
            <person name="Crawford N."/>
            <person name="Daniel-Vedele F."/>
            <person name="David L."/>
            <person name="Dickstein R."/>
            <person name="Fernandez E."/>
            <person name="Forde B."/>
            <person name="Gassmann W."/>
            <person name="Geiger D."/>
            <person name="Gojon A."/>
            <person name="Gong J.M."/>
            <person name="Halkier B.A."/>
            <person name="Harris J.M."/>
            <person name="Hedrich R."/>
            <person name="Limami A.M."/>
            <person name="Rentsch D."/>
            <person name="Seo M."/>
            <person name="Tsay Y.F."/>
            <person name="Zhang M."/>
            <person name="Coruzzi G."/>
            <person name="Lacombe B."/>
        </authorList>
    </citation>
    <scope>GENE FAMILY</scope>
    <scope>NOMENCLATURE</scope>
</reference>
<sequence>MESKGSWTVADAVDYKGRPADKSKTGGWITAALILGIEVVERLSTMGIAVNLVTYLMETMHLPSSTSANIVTDFMGTSFLLCLLGGFLADSFLGRFKTIGIFSTIQALGTGALAVATKLPELRPPTCHHGEACIPATAFQMTILYVSLYLIALGTGGLKSSISGFGSDQFDDKDPKEKAHMAFFFNRFFFFISMGTLLAVTVLVYMQDEVGRSWAYGICTVSMAIAIVIFLCGTKRYRYKKSQGSPVVQIFQVIAAAFRKRKMELPQSIVYLYEDNPEGIRIEHTDQFHLLDKAAIVAEGDFEQTLDGVAIPNPWKLSSVTKVEEVKMMVRLLPIWATTIIFWTTYAQMITFSVEQASTMRRNIGSFKIPAGSLTVFFVAAILITLAVYDRAIMPFWKKWKGKPGFSSLQRIAIGLVLSTAGMAAAALVEQKRLSVAKSSSQKTLPISVFLLVPQFFLVGAGEAFIYTGQLDFFITQSPKGMKTMSTGLFLTTLSLGFFVSSFLVSIVKRVTSTSTDVGWLADNINHGRLDYFYWLLVILSGINFVVYIICALWFKPTKGKDSVEKENGKGFSVEDC</sequence>
<feature type="chain" id="PRO_0000399961" description="Protein NRT1/ PTR FAMILY 6.2">
    <location>
        <begin position="1"/>
        <end position="577"/>
    </location>
</feature>
<feature type="transmembrane region" description="Helical" evidence="2">
    <location>
        <begin position="28"/>
        <end position="48"/>
    </location>
</feature>
<feature type="transmembrane region" description="Helical" evidence="2">
    <location>
        <begin position="74"/>
        <end position="94"/>
    </location>
</feature>
<feature type="transmembrane region" description="Helical" evidence="2">
    <location>
        <begin position="96"/>
        <end position="116"/>
    </location>
</feature>
<feature type="transmembrane region" description="Helical" evidence="2">
    <location>
        <begin position="134"/>
        <end position="154"/>
    </location>
</feature>
<feature type="transmembrane region" description="Helical" evidence="2">
    <location>
        <begin position="183"/>
        <end position="203"/>
    </location>
</feature>
<feature type="transmembrane region" description="Helical" evidence="2">
    <location>
        <begin position="214"/>
        <end position="234"/>
    </location>
</feature>
<feature type="transmembrane region" description="Helical" evidence="2">
    <location>
        <begin position="332"/>
        <end position="352"/>
    </location>
</feature>
<feature type="transmembrane region" description="Helical" evidence="2">
    <location>
        <begin position="369"/>
        <end position="389"/>
    </location>
</feature>
<feature type="transmembrane region" description="Helical" evidence="2">
    <location>
        <begin position="409"/>
        <end position="429"/>
    </location>
</feature>
<feature type="transmembrane region" description="Helical" evidence="2">
    <location>
        <begin position="447"/>
        <end position="467"/>
    </location>
</feature>
<feature type="transmembrane region" description="Helical" evidence="2">
    <location>
        <begin position="488"/>
        <end position="508"/>
    </location>
</feature>
<feature type="transmembrane region" description="Helical" evidence="2">
    <location>
        <begin position="535"/>
        <end position="555"/>
    </location>
</feature>
<feature type="sequence conflict" description="In Ref. 4; AAM20651." evidence="6" ref="4">
    <original>S</original>
    <variation>C</variation>
    <location>
        <position position="435"/>
    </location>
</feature>
<organism>
    <name type="scientific">Arabidopsis thaliana</name>
    <name type="common">Mouse-ear cress</name>
    <dbReference type="NCBI Taxonomy" id="3702"/>
    <lineage>
        <taxon>Eukaryota</taxon>
        <taxon>Viridiplantae</taxon>
        <taxon>Streptophyta</taxon>
        <taxon>Embryophyta</taxon>
        <taxon>Tracheophyta</taxon>
        <taxon>Spermatophyta</taxon>
        <taxon>Magnoliopsida</taxon>
        <taxon>eudicotyledons</taxon>
        <taxon>Gunneridae</taxon>
        <taxon>Pentapetalae</taxon>
        <taxon>rosids</taxon>
        <taxon>malvids</taxon>
        <taxon>Brassicales</taxon>
        <taxon>Brassicaceae</taxon>
        <taxon>Camelineae</taxon>
        <taxon>Arabidopsis</taxon>
    </lineage>
</organism>
<keyword id="KW-0472">Membrane</keyword>
<keyword id="KW-0534">Nitrate assimilation</keyword>
<keyword id="KW-1185">Reference proteome</keyword>
<keyword id="KW-0769">Symport</keyword>
<keyword id="KW-0812">Transmembrane</keyword>
<keyword id="KW-1133">Transmembrane helix</keyword>
<keyword id="KW-0813">Transport</keyword>
<name>PTR27_ARATH</name>
<gene>
    <name type="primary">NPF6.2</name>
    <name type="synonym">NRT1.4</name>
    <name type="synonym">NTP2</name>
    <name type="ordered locus">At2g26690</name>
    <name type="ORF">F18A8.6</name>
</gene>
<proteinExistence type="evidence at protein level"/>
<protein>
    <recommendedName>
        <fullName>Protein NRT1/ PTR FAMILY 6.2</fullName>
        <shortName>AtNPF6.2</shortName>
    </recommendedName>
    <alternativeName>
        <fullName>Nitrate transporter 1.4</fullName>
    </alternativeName>
</protein>
<evidence type="ECO:0000250" key="1"/>
<evidence type="ECO:0000255" key="2"/>
<evidence type="ECO:0000269" key="3">
    <source>
    </source>
</evidence>
<evidence type="ECO:0000269" key="4">
    <source>
    </source>
</evidence>
<evidence type="ECO:0000269" key="5">
    <source>
    </source>
</evidence>
<evidence type="ECO:0000305" key="6"/>
<comment type="function">
    <text evidence="4">Low-affinity proton-dependent nitrate transporter. Not involved in dipeptides transport.</text>
</comment>
<comment type="biophysicochemical properties">
    <kinetics>
        <KM evidence="4">2.4 mM for nitrate at -160 mV</KM>
    </kinetics>
</comment>
<comment type="subcellular location">
    <subcellularLocation>
        <location evidence="1">Membrane</location>
        <topology evidence="1">Multi-pass membrane protein</topology>
    </subcellularLocation>
</comment>
<comment type="tissue specificity">
    <text evidence="4 5">Expressed in shoots, leaves, flowers and siliques. Expressed in leaf petiole.</text>
</comment>
<comment type="induction">
    <text evidence="3">Up-regulated in the shoots by nitrate, but no changes in the roots.</text>
</comment>
<comment type="disruption phenotype">
    <text evidence="4">Wider leaves resulting from increased cell expansion. Lower nitrate content of the petiole and midrib.</text>
</comment>
<comment type="similarity">
    <text evidence="6">Belongs to the major facilitator superfamily. Proton-dependent oligopeptide transporter (POT/PTR) (TC 2.A.17) family.</text>
</comment>
<comment type="sequence caution" evidence="6">
    <conflict type="erroneous gene model prediction">
        <sequence resource="EMBL-CDS" id="AAB95302"/>
    </conflict>
</comment>